<dbReference type="EMBL" id="CP000142">
    <property type="protein sequence ID" value="ABA89928.1"/>
    <property type="molecule type" value="Genomic_DNA"/>
</dbReference>
<dbReference type="RefSeq" id="WP_011342471.1">
    <property type="nucleotide sequence ID" value="NC_007498.2"/>
</dbReference>
<dbReference type="SMR" id="Q3A129"/>
<dbReference type="STRING" id="338963.Pcar_2692"/>
<dbReference type="KEGG" id="pca:Pcar_2692"/>
<dbReference type="eggNOG" id="COG0216">
    <property type="taxonomic scope" value="Bacteria"/>
</dbReference>
<dbReference type="HOGENOM" id="CLU_036856_0_1_7"/>
<dbReference type="OrthoDB" id="9806673at2"/>
<dbReference type="Proteomes" id="UP000002534">
    <property type="component" value="Chromosome"/>
</dbReference>
<dbReference type="GO" id="GO:0005737">
    <property type="term" value="C:cytoplasm"/>
    <property type="evidence" value="ECO:0007669"/>
    <property type="project" value="UniProtKB-SubCell"/>
</dbReference>
<dbReference type="GO" id="GO:0016149">
    <property type="term" value="F:translation release factor activity, codon specific"/>
    <property type="evidence" value="ECO:0007669"/>
    <property type="project" value="UniProtKB-UniRule"/>
</dbReference>
<dbReference type="FunFam" id="3.30.160.20:FF:000004">
    <property type="entry name" value="Peptide chain release factor 1"/>
    <property type="match status" value="1"/>
</dbReference>
<dbReference type="FunFam" id="3.30.70.1660:FF:000002">
    <property type="entry name" value="Peptide chain release factor 1"/>
    <property type="match status" value="1"/>
</dbReference>
<dbReference type="FunFam" id="3.30.70.1660:FF:000004">
    <property type="entry name" value="Peptide chain release factor 1"/>
    <property type="match status" value="1"/>
</dbReference>
<dbReference type="Gene3D" id="3.30.160.20">
    <property type="match status" value="1"/>
</dbReference>
<dbReference type="Gene3D" id="3.30.70.1660">
    <property type="match status" value="1"/>
</dbReference>
<dbReference type="Gene3D" id="6.10.140.1950">
    <property type="match status" value="1"/>
</dbReference>
<dbReference type="HAMAP" id="MF_00093">
    <property type="entry name" value="Rel_fac_1"/>
    <property type="match status" value="1"/>
</dbReference>
<dbReference type="InterPro" id="IPR005139">
    <property type="entry name" value="PCRF"/>
</dbReference>
<dbReference type="InterPro" id="IPR000352">
    <property type="entry name" value="Pep_chain_release_fac_I"/>
</dbReference>
<dbReference type="InterPro" id="IPR045853">
    <property type="entry name" value="Pep_chain_release_fac_I_sf"/>
</dbReference>
<dbReference type="InterPro" id="IPR050057">
    <property type="entry name" value="Prokaryotic/Mito_RF"/>
</dbReference>
<dbReference type="InterPro" id="IPR004373">
    <property type="entry name" value="RF-1"/>
</dbReference>
<dbReference type="NCBIfam" id="TIGR00019">
    <property type="entry name" value="prfA"/>
    <property type="match status" value="1"/>
</dbReference>
<dbReference type="NCBIfam" id="NF001859">
    <property type="entry name" value="PRK00591.1"/>
    <property type="match status" value="1"/>
</dbReference>
<dbReference type="PANTHER" id="PTHR43804">
    <property type="entry name" value="LD18447P"/>
    <property type="match status" value="1"/>
</dbReference>
<dbReference type="PANTHER" id="PTHR43804:SF7">
    <property type="entry name" value="LD18447P"/>
    <property type="match status" value="1"/>
</dbReference>
<dbReference type="Pfam" id="PF03462">
    <property type="entry name" value="PCRF"/>
    <property type="match status" value="1"/>
</dbReference>
<dbReference type="Pfam" id="PF00472">
    <property type="entry name" value="RF-1"/>
    <property type="match status" value="1"/>
</dbReference>
<dbReference type="SMART" id="SM00937">
    <property type="entry name" value="PCRF"/>
    <property type="match status" value="1"/>
</dbReference>
<dbReference type="SUPFAM" id="SSF75620">
    <property type="entry name" value="Release factor"/>
    <property type="match status" value="1"/>
</dbReference>
<dbReference type="PROSITE" id="PS00745">
    <property type="entry name" value="RF_PROK_I"/>
    <property type="match status" value="1"/>
</dbReference>
<name>RF1_SYNC1</name>
<feature type="chain" id="PRO_0000263311" description="Peptide chain release factor 1">
    <location>
        <begin position="1"/>
        <end position="356"/>
    </location>
</feature>
<feature type="modified residue" description="N5-methylglutamine" evidence="1">
    <location>
        <position position="233"/>
    </location>
</feature>
<comment type="function">
    <text evidence="1">Peptide chain release factor 1 directs the termination of translation in response to the peptide chain termination codons UAG and UAA.</text>
</comment>
<comment type="subcellular location">
    <subcellularLocation>
        <location evidence="1">Cytoplasm</location>
    </subcellularLocation>
</comment>
<comment type="PTM">
    <text evidence="1">Methylated by PrmC. Methylation increases the termination efficiency of RF1.</text>
</comment>
<comment type="similarity">
    <text evidence="1">Belongs to the prokaryotic/mitochondrial release factor family.</text>
</comment>
<keyword id="KW-0963">Cytoplasm</keyword>
<keyword id="KW-0488">Methylation</keyword>
<keyword id="KW-0648">Protein biosynthesis</keyword>
<keyword id="KW-1185">Reference proteome</keyword>
<accession>Q3A129</accession>
<gene>
    <name evidence="1" type="primary">prfA</name>
    <name type="ordered locus">Pcar_2692</name>
</gene>
<protein>
    <recommendedName>
        <fullName evidence="1">Peptide chain release factor 1</fullName>
        <shortName evidence="1">RF-1</shortName>
    </recommendedName>
</protein>
<proteinExistence type="inferred from homology"/>
<sequence length="356" mass="39945">MIFNKLEEVEDRFREVEGLLSDPQVVSQQKRFLELTREHAELSSVVAVYREYKRVSEDIEGNRELLQDSDPEMREMAKAELPELEAHREELAQQLKVLLLPKDPNDDKNVILEIRAGTGGDEAALFAGDLFRMYSRFAEGQGWKVETMSVSDSEAGGFKEIIAMISGNRVYSQLKYESGTHRVQRVPETEAQGRIHTSACTVAVLPEAEDVDVDIDPTDLRIDVYRASGAGGQHVNKTESAVRITHVPTGVVVSCQDEKSQHKNKAKAMKVLKSRILDQVMADQQAQMAADRKSQVGSGDRSQRIRTYNFPQGRCTDHRIGLTLYRLEGIMQGNLSELVEPLTLHYQSEAMAAQEA</sequence>
<evidence type="ECO:0000255" key="1">
    <source>
        <dbReference type="HAMAP-Rule" id="MF_00093"/>
    </source>
</evidence>
<organism>
    <name type="scientific">Syntrophotalea carbinolica (strain DSM 2380 / NBRC 103641 / GraBd1)</name>
    <name type="common">Pelobacter carbinolicus</name>
    <dbReference type="NCBI Taxonomy" id="338963"/>
    <lineage>
        <taxon>Bacteria</taxon>
        <taxon>Pseudomonadati</taxon>
        <taxon>Thermodesulfobacteriota</taxon>
        <taxon>Desulfuromonadia</taxon>
        <taxon>Desulfuromonadales</taxon>
        <taxon>Syntrophotaleaceae</taxon>
        <taxon>Syntrophotalea</taxon>
    </lineage>
</organism>
<reference key="1">
    <citation type="submission" date="2005-10" db="EMBL/GenBank/DDBJ databases">
        <title>Complete sequence of Pelobacter carbinolicus DSM 2380.</title>
        <authorList>
            <person name="Copeland A."/>
            <person name="Lucas S."/>
            <person name="Lapidus A."/>
            <person name="Barry K."/>
            <person name="Detter J.C."/>
            <person name="Glavina T."/>
            <person name="Hammon N."/>
            <person name="Israni S."/>
            <person name="Pitluck S."/>
            <person name="Chertkov O."/>
            <person name="Schmutz J."/>
            <person name="Larimer F."/>
            <person name="Land M."/>
            <person name="Kyrpides N."/>
            <person name="Ivanova N."/>
            <person name="Richardson P."/>
        </authorList>
    </citation>
    <scope>NUCLEOTIDE SEQUENCE [LARGE SCALE GENOMIC DNA]</scope>
    <source>
        <strain>DSM 2380 / NBRC 103641 / GraBd1</strain>
    </source>
</reference>